<comment type="function">
    <text evidence="1">Sulfur carrier protein which probably makes part of a sulfur-relay system.</text>
</comment>
<comment type="subcellular location">
    <subcellularLocation>
        <location evidence="1">Cytoplasm</location>
    </subcellularLocation>
</comment>
<comment type="similarity">
    <text evidence="1">Belongs to the sulfur carrier protein TusA family.</text>
</comment>
<dbReference type="EMBL" id="CP000388">
    <property type="protein sequence ID" value="ABG42779.1"/>
    <property type="molecule type" value="Genomic_DNA"/>
</dbReference>
<dbReference type="RefSeq" id="WP_011576963.1">
    <property type="nucleotide sequence ID" value="NC_008228.1"/>
</dbReference>
<dbReference type="SMR" id="Q15MV9"/>
<dbReference type="STRING" id="342610.Patl_4280"/>
<dbReference type="KEGG" id="pat:Patl_4280"/>
<dbReference type="eggNOG" id="COG0425">
    <property type="taxonomic scope" value="Bacteria"/>
</dbReference>
<dbReference type="HOGENOM" id="CLU_165255_5_0_6"/>
<dbReference type="OrthoDB" id="9797352at2"/>
<dbReference type="Proteomes" id="UP000001981">
    <property type="component" value="Chromosome"/>
</dbReference>
<dbReference type="GO" id="GO:0005737">
    <property type="term" value="C:cytoplasm"/>
    <property type="evidence" value="ECO:0007669"/>
    <property type="project" value="UniProtKB-SubCell"/>
</dbReference>
<dbReference type="GO" id="GO:0097163">
    <property type="term" value="F:sulfur carrier activity"/>
    <property type="evidence" value="ECO:0007669"/>
    <property type="project" value="UniProtKB-UniRule"/>
</dbReference>
<dbReference type="GO" id="GO:0002143">
    <property type="term" value="P:tRNA wobble position uridine thiolation"/>
    <property type="evidence" value="ECO:0007669"/>
    <property type="project" value="InterPro"/>
</dbReference>
<dbReference type="CDD" id="cd03423">
    <property type="entry name" value="SirA"/>
    <property type="match status" value="1"/>
</dbReference>
<dbReference type="Gene3D" id="3.30.110.40">
    <property type="entry name" value="TusA-like domain"/>
    <property type="match status" value="1"/>
</dbReference>
<dbReference type="HAMAP" id="MF_00413">
    <property type="entry name" value="Thiourid_synth_A"/>
    <property type="match status" value="1"/>
</dbReference>
<dbReference type="InterPro" id="IPR022931">
    <property type="entry name" value="Sulphur_carrier_TusA"/>
</dbReference>
<dbReference type="InterPro" id="IPR001455">
    <property type="entry name" value="TusA-like"/>
</dbReference>
<dbReference type="InterPro" id="IPR036868">
    <property type="entry name" value="TusA-like_sf"/>
</dbReference>
<dbReference type="NCBIfam" id="NF001423">
    <property type="entry name" value="PRK00299.1"/>
    <property type="match status" value="1"/>
</dbReference>
<dbReference type="PANTHER" id="PTHR33279:SF2">
    <property type="entry name" value="SULFUR CARRIER PROTEIN TUSA"/>
    <property type="match status" value="1"/>
</dbReference>
<dbReference type="PANTHER" id="PTHR33279">
    <property type="entry name" value="SULFUR CARRIER PROTEIN YEDF-RELATED"/>
    <property type="match status" value="1"/>
</dbReference>
<dbReference type="Pfam" id="PF01206">
    <property type="entry name" value="TusA"/>
    <property type="match status" value="1"/>
</dbReference>
<dbReference type="SUPFAM" id="SSF64307">
    <property type="entry name" value="SirA-like"/>
    <property type="match status" value="1"/>
</dbReference>
<dbReference type="PROSITE" id="PS01148">
    <property type="entry name" value="UPF0033"/>
    <property type="match status" value="1"/>
</dbReference>
<organism>
    <name type="scientific">Pseudoalteromonas atlantica (strain T6c / ATCC BAA-1087)</name>
    <dbReference type="NCBI Taxonomy" id="3042615"/>
    <lineage>
        <taxon>Bacteria</taxon>
        <taxon>Pseudomonadati</taxon>
        <taxon>Pseudomonadota</taxon>
        <taxon>Gammaproteobacteria</taxon>
        <taxon>Alteromonadales</taxon>
        <taxon>Alteromonadaceae</taxon>
        <taxon>Paraglaciecola</taxon>
    </lineage>
</organism>
<proteinExistence type="inferred from homology"/>
<reference key="1">
    <citation type="submission" date="2006-06" db="EMBL/GenBank/DDBJ databases">
        <title>Complete sequence of Pseudoalteromonas atlantica T6c.</title>
        <authorList>
            <consortium name="US DOE Joint Genome Institute"/>
            <person name="Copeland A."/>
            <person name="Lucas S."/>
            <person name="Lapidus A."/>
            <person name="Barry K."/>
            <person name="Detter J.C."/>
            <person name="Glavina del Rio T."/>
            <person name="Hammon N."/>
            <person name="Israni S."/>
            <person name="Dalin E."/>
            <person name="Tice H."/>
            <person name="Pitluck S."/>
            <person name="Saunders E."/>
            <person name="Brettin T."/>
            <person name="Bruce D."/>
            <person name="Han C."/>
            <person name="Tapia R."/>
            <person name="Gilna P."/>
            <person name="Schmutz J."/>
            <person name="Larimer F."/>
            <person name="Land M."/>
            <person name="Hauser L."/>
            <person name="Kyrpides N."/>
            <person name="Kim E."/>
            <person name="Karls A.C."/>
            <person name="Bartlett D."/>
            <person name="Higgins B.P."/>
            <person name="Richardson P."/>
        </authorList>
    </citation>
    <scope>NUCLEOTIDE SEQUENCE [LARGE SCALE GENOMIC DNA]</scope>
    <source>
        <strain>T6c / ATCC BAA-1087</strain>
    </source>
</reference>
<protein>
    <recommendedName>
        <fullName evidence="1">Sulfur carrier protein TusA</fullName>
    </recommendedName>
</protein>
<feature type="chain" id="PRO_1000206009" description="Sulfur carrier protein TusA">
    <location>
        <begin position="1"/>
        <end position="83"/>
    </location>
</feature>
<feature type="active site" description="Cysteine persulfide intermediate" evidence="1">
    <location>
        <position position="20"/>
    </location>
</feature>
<keyword id="KW-0963">Cytoplasm</keyword>
<name>TUSA_PSEA6</name>
<accession>Q15MV9</accession>
<gene>
    <name evidence="1" type="primary">tusA</name>
    <name type="ordered locus">Patl_4280</name>
</gene>
<sequence>MTSNNFGDANHQLDAIGLRCPEPVMMVRLSIRNMQLGETLAISADDHSTTRDIPSFCRFMGHTLIASDVDSKPYRYLIRKDQS</sequence>
<evidence type="ECO:0000255" key="1">
    <source>
        <dbReference type="HAMAP-Rule" id="MF_00413"/>
    </source>
</evidence>